<name>HEMH_CHESB</name>
<feature type="chain" id="PRO_1000116059" description="Ferrochelatase">
    <location>
        <begin position="1"/>
        <end position="353"/>
    </location>
</feature>
<feature type="region of interest" description="Disordered" evidence="2">
    <location>
        <begin position="1"/>
        <end position="23"/>
    </location>
</feature>
<feature type="compositionally biased region" description="Basic and acidic residues" evidence="2">
    <location>
        <begin position="1"/>
        <end position="13"/>
    </location>
</feature>
<feature type="binding site" evidence="1">
    <location>
        <position position="223"/>
    </location>
    <ligand>
        <name>Fe cation</name>
        <dbReference type="ChEBI" id="CHEBI:24875"/>
    </ligand>
</feature>
<feature type="binding site" evidence="1">
    <location>
        <position position="304"/>
    </location>
    <ligand>
        <name>Fe cation</name>
        <dbReference type="ChEBI" id="CHEBI:24875"/>
    </ligand>
</feature>
<dbReference type="EC" id="4.98.1.1" evidence="1"/>
<dbReference type="EMBL" id="CP000390">
    <property type="protein sequence ID" value="ABG64101.1"/>
    <property type="molecule type" value="Genomic_DNA"/>
</dbReference>
<dbReference type="SMR" id="Q11ES4"/>
<dbReference type="STRING" id="266779.Meso_2724"/>
<dbReference type="KEGG" id="mes:Meso_2724"/>
<dbReference type="eggNOG" id="COG0276">
    <property type="taxonomic scope" value="Bacteria"/>
</dbReference>
<dbReference type="HOGENOM" id="CLU_018884_0_0_5"/>
<dbReference type="OrthoDB" id="9809741at2"/>
<dbReference type="UniPathway" id="UPA00252">
    <property type="reaction ID" value="UER00325"/>
</dbReference>
<dbReference type="GO" id="GO:0005737">
    <property type="term" value="C:cytoplasm"/>
    <property type="evidence" value="ECO:0007669"/>
    <property type="project" value="UniProtKB-SubCell"/>
</dbReference>
<dbReference type="GO" id="GO:0004325">
    <property type="term" value="F:ferrochelatase activity"/>
    <property type="evidence" value="ECO:0007669"/>
    <property type="project" value="UniProtKB-UniRule"/>
</dbReference>
<dbReference type="GO" id="GO:0046872">
    <property type="term" value="F:metal ion binding"/>
    <property type="evidence" value="ECO:0007669"/>
    <property type="project" value="UniProtKB-KW"/>
</dbReference>
<dbReference type="GO" id="GO:0006783">
    <property type="term" value="P:heme biosynthetic process"/>
    <property type="evidence" value="ECO:0007669"/>
    <property type="project" value="UniProtKB-UniRule"/>
</dbReference>
<dbReference type="CDD" id="cd00419">
    <property type="entry name" value="Ferrochelatase_C"/>
    <property type="match status" value="1"/>
</dbReference>
<dbReference type="CDD" id="cd03411">
    <property type="entry name" value="Ferrochelatase_N"/>
    <property type="match status" value="1"/>
</dbReference>
<dbReference type="FunFam" id="3.40.50.1400:FF:000002">
    <property type="entry name" value="Ferrochelatase"/>
    <property type="match status" value="1"/>
</dbReference>
<dbReference type="Gene3D" id="3.40.50.1400">
    <property type="match status" value="2"/>
</dbReference>
<dbReference type="HAMAP" id="MF_00323">
    <property type="entry name" value="Ferrochelatase"/>
    <property type="match status" value="1"/>
</dbReference>
<dbReference type="InterPro" id="IPR001015">
    <property type="entry name" value="Ferrochelatase"/>
</dbReference>
<dbReference type="InterPro" id="IPR019772">
    <property type="entry name" value="Ferrochelatase_AS"/>
</dbReference>
<dbReference type="InterPro" id="IPR033644">
    <property type="entry name" value="Ferrochelatase_C"/>
</dbReference>
<dbReference type="InterPro" id="IPR033659">
    <property type="entry name" value="Ferrochelatase_N"/>
</dbReference>
<dbReference type="NCBIfam" id="TIGR00109">
    <property type="entry name" value="hemH"/>
    <property type="match status" value="1"/>
</dbReference>
<dbReference type="PANTHER" id="PTHR11108">
    <property type="entry name" value="FERROCHELATASE"/>
    <property type="match status" value="1"/>
</dbReference>
<dbReference type="PANTHER" id="PTHR11108:SF1">
    <property type="entry name" value="FERROCHELATASE, MITOCHONDRIAL"/>
    <property type="match status" value="1"/>
</dbReference>
<dbReference type="Pfam" id="PF00762">
    <property type="entry name" value="Ferrochelatase"/>
    <property type="match status" value="1"/>
</dbReference>
<dbReference type="SUPFAM" id="SSF53800">
    <property type="entry name" value="Chelatase"/>
    <property type="match status" value="1"/>
</dbReference>
<dbReference type="PROSITE" id="PS00534">
    <property type="entry name" value="FERROCHELATASE"/>
    <property type="match status" value="1"/>
</dbReference>
<accession>Q11ES4</accession>
<reference key="1">
    <citation type="submission" date="2006-06" db="EMBL/GenBank/DDBJ databases">
        <title>Complete sequence of chromosome of Mesorhizobium sp. BNC1.</title>
        <authorList>
            <consortium name="US DOE Joint Genome Institute"/>
            <person name="Copeland A."/>
            <person name="Lucas S."/>
            <person name="Lapidus A."/>
            <person name="Barry K."/>
            <person name="Detter J.C."/>
            <person name="Glavina del Rio T."/>
            <person name="Hammon N."/>
            <person name="Israni S."/>
            <person name="Dalin E."/>
            <person name="Tice H."/>
            <person name="Pitluck S."/>
            <person name="Chertkov O."/>
            <person name="Brettin T."/>
            <person name="Bruce D."/>
            <person name="Han C."/>
            <person name="Tapia R."/>
            <person name="Gilna P."/>
            <person name="Schmutz J."/>
            <person name="Larimer F."/>
            <person name="Land M."/>
            <person name="Hauser L."/>
            <person name="Kyrpides N."/>
            <person name="Mikhailova N."/>
            <person name="Richardson P."/>
        </authorList>
    </citation>
    <scope>NUCLEOTIDE SEQUENCE [LARGE SCALE GENOMIC DNA]</scope>
    <source>
        <strain>BNC1</strain>
    </source>
</reference>
<evidence type="ECO:0000255" key="1">
    <source>
        <dbReference type="HAMAP-Rule" id="MF_00323"/>
    </source>
</evidence>
<evidence type="ECO:0000256" key="2">
    <source>
        <dbReference type="SAM" id="MobiDB-lite"/>
    </source>
</evidence>
<comment type="function">
    <text evidence="1">Catalyzes the ferrous insertion into protoporphyrin IX.</text>
</comment>
<comment type="catalytic activity">
    <reaction evidence="1">
        <text>heme b + 2 H(+) = protoporphyrin IX + Fe(2+)</text>
        <dbReference type="Rhea" id="RHEA:22584"/>
        <dbReference type="ChEBI" id="CHEBI:15378"/>
        <dbReference type="ChEBI" id="CHEBI:29033"/>
        <dbReference type="ChEBI" id="CHEBI:57306"/>
        <dbReference type="ChEBI" id="CHEBI:60344"/>
        <dbReference type="EC" id="4.98.1.1"/>
    </reaction>
</comment>
<comment type="pathway">
    <text evidence="1">Porphyrin-containing compound metabolism; protoheme biosynthesis; protoheme from protoporphyrin-IX: step 1/1.</text>
</comment>
<comment type="subcellular location">
    <subcellularLocation>
        <location evidence="1">Cytoplasm</location>
    </subcellularLocation>
</comment>
<comment type="similarity">
    <text evidence="1">Belongs to the ferrochelatase family.</text>
</comment>
<organism>
    <name type="scientific">Chelativorans sp. (strain BNC1)</name>
    <dbReference type="NCBI Taxonomy" id="266779"/>
    <lineage>
        <taxon>Bacteria</taxon>
        <taxon>Pseudomonadati</taxon>
        <taxon>Pseudomonadota</taxon>
        <taxon>Alphaproteobacteria</taxon>
        <taxon>Hyphomicrobiales</taxon>
        <taxon>Phyllobacteriaceae</taxon>
        <taxon>Chelativorans</taxon>
    </lineage>
</organism>
<proteinExistence type="inferred from homology"/>
<keyword id="KW-0963">Cytoplasm</keyword>
<keyword id="KW-0350">Heme biosynthesis</keyword>
<keyword id="KW-0408">Iron</keyword>
<keyword id="KW-0456">Lyase</keyword>
<keyword id="KW-0479">Metal-binding</keyword>
<keyword id="KW-0627">Porphyrin biosynthesis</keyword>
<gene>
    <name evidence="1" type="primary">hemH</name>
    <name type="ordered locus">Meso_2724</name>
</gene>
<protein>
    <recommendedName>
        <fullName evidence="1">Ferrochelatase</fullName>
        <ecNumber evidence="1">4.98.1.1</ecNumber>
    </recommendedName>
    <alternativeName>
        <fullName evidence="1">Heme synthase</fullName>
    </alternativeName>
    <alternativeName>
        <fullName evidence="1">Protoheme ferro-lyase</fullName>
    </alternativeName>
</protein>
<sequence length="353" mass="40169">MTLERTGRDEEKALTQPPSGHSSVQAGKVGVLLVNLGTPDGTDYWPMRRYLGEFLSDRRVIEWPRAVWYPILYGIILARRPKKSGALYAKIWNREQNESPLRTFTRAQGQKLATALADKENVIVDWAMRYGSPSIETVTKSLIERGCDRIVMFPLYPQYSATTTATVNDKFFEALIEMRHQPAVRTVPAYPEEPVYIDALVRSIERHLATLDFEPEVVVASYHGIPQSYARRGDPYYEQCLATTARVRERLGWDEKKLITTFQSRFGPEEWLQPYTDKTVEQLARDGVRSIAVINPGFVSDCLETLEEIAVEADRTFREAGGKNFTHIPCLNDSDEGMAVIESLIRREMSGWA</sequence>